<proteinExistence type="inferred from homology"/>
<protein>
    <recommendedName>
        <fullName evidence="2">Small ribosomal subunit protein uS12cz/uS12cy</fullName>
    </recommendedName>
    <alternativeName>
        <fullName evidence="3">30S ribosomal protein S12, chloroplastic</fullName>
    </alternativeName>
</protein>
<geneLocation type="chloroplast"/>
<accession>Q3C1K5</accession>
<reference key="1">
    <citation type="journal article" date="2006" name="Mol. Genet. Genomics">
        <title>The chloroplast genome of Nicotiana sylvestris and Nicotiana tomentosiformis: complete sequencing confirms that the Nicotiana sylvestris progenitor is the maternal genome donor of Nicotiana tabacum.</title>
        <authorList>
            <person name="Yukawa M."/>
            <person name="Tsudzuki T."/>
            <person name="Sugiura M."/>
        </authorList>
    </citation>
    <scope>NUCLEOTIDE SEQUENCE [LARGE SCALE GENOMIC DNA]</scope>
</reference>
<dbReference type="EMBL" id="AB237912">
    <property type="protein sequence ID" value="BAE46678.1"/>
    <property type="molecule type" value="Genomic_DNA"/>
</dbReference>
<dbReference type="EMBL" id="AB237912">
    <property type="protein sequence ID" value="BAE46705.1"/>
    <property type="molecule type" value="Genomic_DNA"/>
</dbReference>
<dbReference type="SMR" id="Q3C1K5"/>
<dbReference type="KEGG" id="nsy:3735094"/>
<dbReference type="KEGG" id="nsy:3735160"/>
<dbReference type="OrthoDB" id="18249at4085"/>
<dbReference type="Proteomes" id="UP000189701">
    <property type="component" value="Unplaced"/>
</dbReference>
<dbReference type="GO" id="GO:0009507">
    <property type="term" value="C:chloroplast"/>
    <property type="evidence" value="ECO:0007669"/>
    <property type="project" value="UniProtKB-SubCell"/>
</dbReference>
<dbReference type="GO" id="GO:0015935">
    <property type="term" value="C:small ribosomal subunit"/>
    <property type="evidence" value="ECO:0007669"/>
    <property type="project" value="InterPro"/>
</dbReference>
<dbReference type="GO" id="GO:0019843">
    <property type="term" value="F:rRNA binding"/>
    <property type="evidence" value="ECO:0007669"/>
    <property type="project" value="UniProtKB-UniRule"/>
</dbReference>
<dbReference type="GO" id="GO:0003735">
    <property type="term" value="F:structural constituent of ribosome"/>
    <property type="evidence" value="ECO:0007669"/>
    <property type="project" value="InterPro"/>
</dbReference>
<dbReference type="GO" id="GO:0006412">
    <property type="term" value="P:translation"/>
    <property type="evidence" value="ECO:0007669"/>
    <property type="project" value="UniProtKB-UniRule"/>
</dbReference>
<dbReference type="CDD" id="cd03368">
    <property type="entry name" value="Ribosomal_S12"/>
    <property type="match status" value="1"/>
</dbReference>
<dbReference type="FunFam" id="2.40.50.140:FF:000008">
    <property type="entry name" value="30S ribosomal protein S12, chloroplastic"/>
    <property type="match status" value="1"/>
</dbReference>
<dbReference type="Gene3D" id="2.40.50.140">
    <property type="entry name" value="Nucleic acid-binding proteins"/>
    <property type="match status" value="1"/>
</dbReference>
<dbReference type="HAMAP" id="MF_00403_B">
    <property type="entry name" value="Ribosomal_uS12_B"/>
    <property type="match status" value="1"/>
</dbReference>
<dbReference type="InterPro" id="IPR012340">
    <property type="entry name" value="NA-bd_OB-fold"/>
</dbReference>
<dbReference type="InterPro" id="IPR006032">
    <property type="entry name" value="Ribosomal_uS12"/>
</dbReference>
<dbReference type="InterPro" id="IPR005679">
    <property type="entry name" value="Ribosomal_uS12_bac"/>
</dbReference>
<dbReference type="NCBIfam" id="TIGR00981">
    <property type="entry name" value="rpsL_bact"/>
    <property type="match status" value="1"/>
</dbReference>
<dbReference type="PANTHER" id="PTHR11652">
    <property type="entry name" value="30S RIBOSOMAL PROTEIN S12 FAMILY MEMBER"/>
    <property type="match status" value="1"/>
</dbReference>
<dbReference type="Pfam" id="PF00164">
    <property type="entry name" value="Ribosom_S12_S23"/>
    <property type="match status" value="1"/>
</dbReference>
<dbReference type="PIRSF" id="PIRSF002133">
    <property type="entry name" value="Ribosomal_S12/S23"/>
    <property type="match status" value="1"/>
</dbReference>
<dbReference type="PRINTS" id="PR01034">
    <property type="entry name" value="RIBOSOMALS12"/>
</dbReference>
<dbReference type="SUPFAM" id="SSF50249">
    <property type="entry name" value="Nucleic acid-binding proteins"/>
    <property type="match status" value="1"/>
</dbReference>
<dbReference type="PROSITE" id="PS00055">
    <property type="entry name" value="RIBOSOMAL_S12"/>
    <property type="match status" value="1"/>
</dbReference>
<sequence length="123" mass="13764">MPTIKQLIRNTRQPIRNVTKSPALRGCPQRRGTCTRVYTITPKKPNSALRKVARVRLTSGFEITAYIPGIGHNLQEHSVVLVRGGRVKDLPGVRYHIVRGTLDAVGVKDRQQGRSKYGVKKPK</sequence>
<name>RR12_NICSY</name>
<keyword id="KW-0150">Chloroplast</keyword>
<keyword id="KW-0934">Plastid</keyword>
<keyword id="KW-1185">Reference proteome</keyword>
<keyword id="KW-0687">Ribonucleoprotein</keyword>
<keyword id="KW-0689">Ribosomal protein</keyword>
<keyword id="KW-0694">RNA-binding</keyword>
<keyword id="KW-0699">rRNA-binding</keyword>
<comment type="function">
    <text evidence="1">With S4 and S5 plays an important role in translational accuracy. Located at the interface of the 30S and 50S subunits (By similarity).</text>
</comment>
<comment type="subunit">
    <text evidence="1">Part of the 30S ribosomal subunit.</text>
</comment>
<comment type="subcellular location">
    <subcellularLocation>
        <location>Plastid</location>
        <location>Chloroplast</location>
    </subcellularLocation>
</comment>
<comment type="similarity">
    <text evidence="3">Belongs to the universal ribosomal protein uS12 family.</text>
</comment>
<feature type="chain" id="PRO_0000276619" description="Small ribosomal subunit protein uS12cz/uS12cy">
    <location>
        <begin position="1"/>
        <end position="123"/>
    </location>
</feature>
<evidence type="ECO:0000250" key="1"/>
<evidence type="ECO:0000255" key="2">
    <source>
        <dbReference type="HAMAP-Rule" id="MF_00403"/>
    </source>
</evidence>
<evidence type="ECO:0000305" key="3"/>
<organism>
    <name type="scientific">Nicotiana sylvestris</name>
    <name type="common">Wood tobacco</name>
    <name type="synonym">South American tobacco</name>
    <dbReference type="NCBI Taxonomy" id="4096"/>
    <lineage>
        <taxon>Eukaryota</taxon>
        <taxon>Viridiplantae</taxon>
        <taxon>Streptophyta</taxon>
        <taxon>Embryophyta</taxon>
        <taxon>Tracheophyta</taxon>
        <taxon>Spermatophyta</taxon>
        <taxon>Magnoliopsida</taxon>
        <taxon>eudicotyledons</taxon>
        <taxon>Gunneridae</taxon>
        <taxon>Pentapetalae</taxon>
        <taxon>asterids</taxon>
        <taxon>lamiids</taxon>
        <taxon>Solanales</taxon>
        <taxon>Solanaceae</taxon>
        <taxon>Nicotianoideae</taxon>
        <taxon>Nicotianeae</taxon>
        <taxon>Nicotiana</taxon>
    </lineage>
</organism>
<gene>
    <name type="primary">rps12-A</name>
</gene>
<gene>
    <name type="primary">rps12-B</name>
</gene>